<dbReference type="EMBL" id="AM933173">
    <property type="protein sequence ID" value="CAR37653.1"/>
    <property type="molecule type" value="Genomic_DNA"/>
</dbReference>
<dbReference type="RefSeq" id="WP_000977510.1">
    <property type="nucleotide sequence ID" value="NC_011274.1"/>
</dbReference>
<dbReference type="SMR" id="B5RAY5"/>
<dbReference type="KEGG" id="seg:SG1797"/>
<dbReference type="HOGENOM" id="CLU_167445_0_0_6"/>
<dbReference type="Proteomes" id="UP000008321">
    <property type="component" value="Chromosome"/>
</dbReference>
<dbReference type="GO" id="GO:0003677">
    <property type="term" value="F:DNA binding"/>
    <property type="evidence" value="ECO:0007669"/>
    <property type="project" value="UniProtKB-UniRule"/>
</dbReference>
<dbReference type="GO" id="GO:0051301">
    <property type="term" value="P:cell division"/>
    <property type="evidence" value="ECO:0007669"/>
    <property type="project" value="UniProtKB-UniRule"/>
</dbReference>
<dbReference type="Gene3D" id="3.30.730.20">
    <property type="entry name" value="Cell division activator CedA"/>
    <property type="match status" value="1"/>
</dbReference>
<dbReference type="HAMAP" id="MF_01580">
    <property type="entry name" value="CedA"/>
    <property type="match status" value="1"/>
</dbReference>
<dbReference type="InterPro" id="IPR038463">
    <property type="entry name" value="CedA-like_sf"/>
</dbReference>
<dbReference type="InterPro" id="IPR019666">
    <property type="entry name" value="Cell_div_activator_CedA"/>
</dbReference>
<dbReference type="NCBIfam" id="NF007510">
    <property type="entry name" value="PRK10113.1"/>
    <property type="match status" value="1"/>
</dbReference>
<dbReference type="Pfam" id="PF10729">
    <property type="entry name" value="CedA"/>
    <property type="match status" value="1"/>
</dbReference>
<proteinExistence type="inferred from homology"/>
<sequence>MMKPLRQQNRQIISYIPRVEPAPPEHAIKMDTFRDVWILRGKYVAFVLTGESFQRSPAFSVPESAQRWANQVRQENEIAD</sequence>
<gene>
    <name evidence="1" type="primary">cedA</name>
    <name type="ordered locus">SG1797</name>
</gene>
<accession>B5RAY5</accession>
<keyword id="KW-0131">Cell cycle</keyword>
<keyword id="KW-0132">Cell division</keyword>
<keyword id="KW-0238">DNA-binding</keyword>
<feature type="chain" id="PRO_1000200992" description="Cell division activator CedA">
    <location>
        <begin position="1"/>
        <end position="80"/>
    </location>
</feature>
<protein>
    <recommendedName>
        <fullName evidence="1">Cell division activator CedA</fullName>
    </recommendedName>
</protein>
<name>CEDA_SALG2</name>
<evidence type="ECO:0000255" key="1">
    <source>
        <dbReference type="HAMAP-Rule" id="MF_01580"/>
    </source>
</evidence>
<comment type="function">
    <text evidence="1">Activates the cell division inhibited by chromosomal DNA over-replication.</text>
</comment>
<comment type="similarity">
    <text evidence="1">Belongs to the CedA family.</text>
</comment>
<organism>
    <name type="scientific">Salmonella gallinarum (strain 287/91 / NCTC 13346)</name>
    <dbReference type="NCBI Taxonomy" id="550538"/>
    <lineage>
        <taxon>Bacteria</taxon>
        <taxon>Pseudomonadati</taxon>
        <taxon>Pseudomonadota</taxon>
        <taxon>Gammaproteobacteria</taxon>
        <taxon>Enterobacterales</taxon>
        <taxon>Enterobacteriaceae</taxon>
        <taxon>Salmonella</taxon>
    </lineage>
</organism>
<reference key="1">
    <citation type="journal article" date="2008" name="Genome Res.">
        <title>Comparative genome analysis of Salmonella enteritidis PT4 and Salmonella gallinarum 287/91 provides insights into evolutionary and host adaptation pathways.</title>
        <authorList>
            <person name="Thomson N.R."/>
            <person name="Clayton D.J."/>
            <person name="Windhorst D."/>
            <person name="Vernikos G."/>
            <person name="Davidson S."/>
            <person name="Churcher C."/>
            <person name="Quail M.A."/>
            <person name="Stevens M."/>
            <person name="Jones M.A."/>
            <person name="Watson M."/>
            <person name="Barron A."/>
            <person name="Layton A."/>
            <person name="Pickard D."/>
            <person name="Kingsley R.A."/>
            <person name="Bignell A."/>
            <person name="Clark L."/>
            <person name="Harris B."/>
            <person name="Ormond D."/>
            <person name="Abdellah Z."/>
            <person name="Brooks K."/>
            <person name="Cherevach I."/>
            <person name="Chillingworth T."/>
            <person name="Woodward J."/>
            <person name="Norberczak H."/>
            <person name="Lord A."/>
            <person name="Arrowsmith C."/>
            <person name="Jagels K."/>
            <person name="Moule S."/>
            <person name="Mungall K."/>
            <person name="Saunders M."/>
            <person name="Whitehead S."/>
            <person name="Chabalgoity J.A."/>
            <person name="Maskell D."/>
            <person name="Humphreys T."/>
            <person name="Roberts M."/>
            <person name="Barrow P.A."/>
            <person name="Dougan G."/>
            <person name="Parkhill J."/>
        </authorList>
    </citation>
    <scope>NUCLEOTIDE SEQUENCE [LARGE SCALE GENOMIC DNA]</scope>
    <source>
        <strain>287/91 / NCTC 13346</strain>
    </source>
</reference>